<proteinExistence type="evidence at protein level"/>
<gene>
    <name type="primary">nudE</name>
    <name type="ORF">AN6125</name>
</gene>
<sequence>MPSADEPSSTRTNGTSSRSDQLAYYKKQYEQLESELADFQASSRELEAELEKEIEASEKRERQLKEKVDNLRYEVEEWKSKYKQSKSEASTAQNALQKEITSLRDANLTLQLKLRDTEVANDDYERQARHTTSSLEDMESKYNQALEREVLLDMEYKQGEQERESLRIENQRLRDELNDLKIETEIVQERLRNNNRRRRPAPLGRSPSTPHTPEIFDRSPGESTVSSPLFSTPPTKLSLTLASATATPPSPPMSETSSSMRKSLTAASGFPLQKASASESFGTRSLYGNRPQRFQAHSRATSYAFSNGRSTPSATTTRPSLPKANNTTANRPSGIPKSGSLHQIRGLIGKMQKLEERVQSAKSKLPPPSETASRASSRAGSMLDASPGAATIAMRRDTRKRLSGSSFSSSVRDGDGAPSYVTSSRPSYGTRTQGDSRPSSRTSFSSSLSHSTHPSVTPSNRPESRQSRTKTPLGHYSTNPTTESRRPRSSLSNPAGQSTPINGMTYIDEDEDLAEQFNMRATISSTRPTRLPSFSNPAFSTPTGLKKRSTSGMSGIPAPRTLRRGNTMGPPKTKPKPVAGDLGETF</sequence>
<name>NDE1_EMENI</name>
<evidence type="ECO:0000250" key="1"/>
<evidence type="ECO:0000255" key="2"/>
<evidence type="ECO:0000256" key="3">
    <source>
        <dbReference type="SAM" id="MobiDB-lite"/>
    </source>
</evidence>
<evidence type="ECO:0000269" key="4">
    <source>
    </source>
</evidence>
<evidence type="ECO:0000269" key="5">
    <source>
    </source>
</evidence>
<evidence type="ECO:0000269" key="6">
    <source>
    </source>
</evidence>
<evidence type="ECO:0000305" key="7"/>
<protein>
    <recommendedName>
        <fullName>Nuclear distribution protein nudE</fullName>
    </recommendedName>
</protein>
<comment type="function">
    <text evidence="5 6">Required for nuclear migration within hyphae during vegetative growth.</text>
</comment>
<comment type="subunit">
    <text evidence="1 4">Self-associates (By similarity). Interacts with nudF.</text>
</comment>
<comment type="interaction">
    <interactant intactId="EBI-1009303">
        <id>O74689</id>
    </interactant>
    <interactant intactId="EBI-1009311">
        <id>Q00664</id>
        <label>nudF</label>
    </interactant>
    <organismsDiffer>false</organismsDiffer>
    <experiments>3</experiments>
</comment>
<comment type="subcellular location">
    <subcellularLocation>
        <location evidence="5 6">Cytoplasm</location>
        <location evidence="5 6">Cytoskeleton</location>
    </subcellularLocation>
    <text>Localizes to the plus ends of microtubules.</text>
</comment>
<comment type="similarity">
    <text evidence="7">Belongs to the nudE family.</text>
</comment>
<accession>O74689</accession>
<accession>C8V2D2</accession>
<accession>Q5B005</accession>
<reference key="1">
    <citation type="journal article" date="2000" name="J. Cell Biol.">
        <title>The LIS1-related NUDF protein of Aspergillus nidulans interacts with the coiled-coil domain of the NUDE/RO11 protein.</title>
        <authorList>
            <person name="Efimov V.P."/>
            <person name="Morris N.R."/>
        </authorList>
    </citation>
    <scope>NUCLEOTIDE SEQUENCE [MRNA]</scope>
    <scope>INTERACTION WITH NUDF</scope>
    <source>
        <strain>XX20</strain>
    </source>
</reference>
<reference key="2">
    <citation type="journal article" date="2005" name="Nature">
        <title>Sequencing of Aspergillus nidulans and comparative analysis with A. fumigatus and A. oryzae.</title>
        <authorList>
            <person name="Galagan J.E."/>
            <person name="Calvo S.E."/>
            <person name="Cuomo C."/>
            <person name="Ma L.-J."/>
            <person name="Wortman J.R."/>
            <person name="Batzoglou S."/>
            <person name="Lee S.-I."/>
            <person name="Bastuerkmen M."/>
            <person name="Spevak C.C."/>
            <person name="Clutterbuck J."/>
            <person name="Kapitonov V."/>
            <person name="Jurka J."/>
            <person name="Scazzocchio C."/>
            <person name="Farman M.L."/>
            <person name="Butler J."/>
            <person name="Purcell S."/>
            <person name="Harris S."/>
            <person name="Braus G.H."/>
            <person name="Draht O."/>
            <person name="Busch S."/>
            <person name="D'Enfert C."/>
            <person name="Bouchier C."/>
            <person name="Goldman G.H."/>
            <person name="Bell-Pedersen D."/>
            <person name="Griffiths-Jones S."/>
            <person name="Doonan J.H."/>
            <person name="Yu J."/>
            <person name="Vienken K."/>
            <person name="Pain A."/>
            <person name="Freitag M."/>
            <person name="Selker E.U."/>
            <person name="Archer D.B."/>
            <person name="Penalva M.A."/>
            <person name="Oakley B.R."/>
            <person name="Momany M."/>
            <person name="Tanaka T."/>
            <person name="Kumagai T."/>
            <person name="Asai K."/>
            <person name="Machida M."/>
            <person name="Nierman W.C."/>
            <person name="Denning D.W."/>
            <person name="Caddick M.X."/>
            <person name="Hynes M."/>
            <person name="Paoletti M."/>
            <person name="Fischer R."/>
            <person name="Miller B.L."/>
            <person name="Dyer P.S."/>
            <person name="Sachs M.S."/>
            <person name="Osmani S.A."/>
            <person name="Birren B.W."/>
        </authorList>
    </citation>
    <scope>NUCLEOTIDE SEQUENCE [LARGE SCALE GENOMIC DNA]</scope>
    <source>
        <strain>FGSC A4 / ATCC 38163 / CBS 112.46 / NRRL 194 / M139</strain>
    </source>
</reference>
<reference key="3">
    <citation type="journal article" date="2009" name="Fungal Genet. Biol.">
        <title>The 2008 update of the Aspergillus nidulans genome annotation: a community effort.</title>
        <authorList>
            <person name="Wortman J.R."/>
            <person name="Gilsenan J.M."/>
            <person name="Joardar V."/>
            <person name="Deegan J."/>
            <person name="Clutterbuck J."/>
            <person name="Andersen M.R."/>
            <person name="Archer D."/>
            <person name="Bencina M."/>
            <person name="Braus G."/>
            <person name="Coutinho P."/>
            <person name="von Dohren H."/>
            <person name="Doonan J."/>
            <person name="Driessen A.J."/>
            <person name="Durek P."/>
            <person name="Espeso E."/>
            <person name="Fekete E."/>
            <person name="Flipphi M."/>
            <person name="Estrada C.G."/>
            <person name="Geysens S."/>
            <person name="Goldman G."/>
            <person name="de Groot P.W."/>
            <person name="Hansen K."/>
            <person name="Harris S.D."/>
            <person name="Heinekamp T."/>
            <person name="Helmstaedt K."/>
            <person name="Henrissat B."/>
            <person name="Hofmann G."/>
            <person name="Homan T."/>
            <person name="Horio T."/>
            <person name="Horiuchi H."/>
            <person name="James S."/>
            <person name="Jones M."/>
            <person name="Karaffa L."/>
            <person name="Karanyi Z."/>
            <person name="Kato M."/>
            <person name="Keller N."/>
            <person name="Kelly D.E."/>
            <person name="Kiel J.A."/>
            <person name="Kim J.M."/>
            <person name="van der Klei I.J."/>
            <person name="Klis F.M."/>
            <person name="Kovalchuk A."/>
            <person name="Krasevec N."/>
            <person name="Kubicek C.P."/>
            <person name="Liu B."/>
            <person name="Maccabe A."/>
            <person name="Meyer V."/>
            <person name="Mirabito P."/>
            <person name="Miskei M."/>
            <person name="Mos M."/>
            <person name="Mullins J."/>
            <person name="Nelson D.R."/>
            <person name="Nielsen J."/>
            <person name="Oakley B.R."/>
            <person name="Osmani S.A."/>
            <person name="Pakula T."/>
            <person name="Paszewski A."/>
            <person name="Paulsen I."/>
            <person name="Pilsyk S."/>
            <person name="Pocsi I."/>
            <person name="Punt P.J."/>
            <person name="Ram A.F."/>
            <person name="Ren Q."/>
            <person name="Robellet X."/>
            <person name="Robson G."/>
            <person name="Seiboth B."/>
            <person name="van Solingen P."/>
            <person name="Specht T."/>
            <person name="Sun J."/>
            <person name="Taheri-Talesh N."/>
            <person name="Takeshita N."/>
            <person name="Ussery D."/>
            <person name="vanKuyk P.A."/>
            <person name="Visser H."/>
            <person name="van de Vondervoort P.J."/>
            <person name="de Vries R.P."/>
            <person name="Walton J."/>
            <person name="Xiang X."/>
            <person name="Xiong Y."/>
            <person name="Zeng A.P."/>
            <person name="Brandt B.W."/>
            <person name="Cornell M.J."/>
            <person name="van den Hondel C.A."/>
            <person name="Visser J."/>
            <person name="Oliver S.G."/>
            <person name="Turner G."/>
        </authorList>
    </citation>
    <scope>GENOME REANNOTATION</scope>
    <source>
        <strain>FGSC A4 / ATCC 38163 / CBS 112.46 / NRRL 194 / M139</strain>
    </source>
</reference>
<reference key="4">
    <citation type="journal article" date="2003" name="Mol. Biol. Cell">
        <title>Roles of NUDE and NUDF proteins of Aspergillus nidulans: insights from intracellular localization and overexpression effects.</title>
        <authorList>
            <person name="Efimov V.P."/>
        </authorList>
    </citation>
    <scope>FUNCTION</scope>
    <scope>SUBCELLULAR LOCATION</scope>
</reference>
<reference key="5">
    <citation type="journal article" date="2006" name="Mol. Biol. Cell">
        <title>CLIP-170 homologue and NUDE play overlapping roles in NUDF localization in Aspergillus nidulans.</title>
        <authorList>
            <person name="Efimov V.P."/>
            <person name="Zhang J."/>
            <person name="Xiang X."/>
        </authorList>
    </citation>
    <scope>FUNCTION</scope>
    <scope>SUBCELLULAR LOCATION</scope>
</reference>
<feature type="chain" id="PRO_0000240224" description="Nuclear distribution protein nudE">
    <location>
        <begin position="1"/>
        <end position="586"/>
    </location>
</feature>
<feature type="region of interest" description="Interaction with nudF">
    <location>
        <begin position="1"/>
        <end position="215"/>
    </location>
</feature>
<feature type="region of interest" description="Disordered" evidence="3">
    <location>
        <begin position="1"/>
        <end position="21"/>
    </location>
</feature>
<feature type="region of interest" description="Disordered" evidence="3">
    <location>
        <begin position="191"/>
        <end position="274"/>
    </location>
</feature>
<feature type="region of interest" description="Localization to microtubule plus ends">
    <location>
        <begin position="215"/>
        <end position="586"/>
    </location>
</feature>
<feature type="region of interest" description="Disordered" evidence="3">
    <location>
        <begin position="297"/>
        <end position="341"/>
    </location>
</feature>
<feature type="region of interest" description="Disordered" evidence="3">
    <location>
        <begin position="355"/>
        <end position="504"/>
    </location>
</feature>
<feature type="region of interest" description="Disordered" evidence="3">
    <location>
        <begin position="526"/>
        <end position="586"/>
    </location>
</feature>
<feature type="coiled-coil region" evidence="2">
    <location>
        <begin position="17"/>
        <end position="197"/>
    </location>
</feature>
<feature type="compositionally biased region" description="Low complexity" evidence="3">
    <location>
        <begin position="9"/>
        <end position="19"/>
    </location>
</feature>
<feature type="compositionally biased region" description="Polar residues" evidence="3">
    <location>
        <begin position="221"/>
        <end position="233"/>
    </location>
</feature>
<feature type="compositionally biased region" description="Low complexity" evidence="3">
    <location>
        <begin position="234"/>
        <end position="259"/>
    </location>
</feature>
<feature type="compositionally biased region" description="Polar residues" evidence="3">
    <location>
        <begin position="298"/>
        <end position="308"/>
    </location>
</feature>
<feature type="compositionally biased region" description="Low complexity" evidence="3">
    <location>
        <begin position="309"/>
        <end position="320"/>
    </location>
</feature>
<feature type="compositionally biased region" description="Polar residues" evidence="3">
    <location>
        <begin position="370"/>
        <end position="379"/>
    </location>
</feature>
<feature type="compositionally biased region" description="Polar residues" evidence="3">
    <location>
        <begin position="420"/>
        <end position="435"/>
    </location>
</feature>
<feature type="compositionally biased region" description="Low complexity" evidence="3">
    <location>
        <begin position="436"/>
        <end position="459"/>
    </location>
</feature>
<feature type="compositionally biased region" description="Polar residues" evidence="3">
    <location>
        <begin position="489"/>
        <end position="502"/>
    </location>
</feature>
<feature type="compositionally biased region" description="Polar residues" evidence="3">
    <location>
        <begin position="526"/>
        <end position="543"/>
    </location>
</feature>
<keyword id="KW-0175">Coiled coil</keyword>
<keyword id="KW-0963">Cytoplasm</keyword>
<keyword id="KW-0206">Cytoskeleton</keyword>
<keyword id="KW-0493">Microtubule</keyword>
<keyword id="KW-1185">Reference proteome</keyword>
<keyword id="KW-0813">Transport</keyword>
<dbReference type="EMBL" id="AF085679">
    <property type="protein sequence ID" value="AAC35556.1"/>
    <property type="molecule type" value="Genomic_DNA"/>
</dbReference>
<dbReference type="EMBL" id="AACD01000104">
    <property type="protein sequence ID" value="EAA58100.1"/>
    <property type="molecule type" value="Genomic_DNA"/>
</dbReference>
<dbReference type="EMBL" id="BN001301">
    <property type="protein sequence ID" value="CBF70134.1"/>
    <property type="molecule type" value="Genomic_DNA"/>
</dbReference>
<dbReference type="RefSeq" id="XP_663729.1">
    <property type="nucleotide sequence ID" value="XM_658637.1"/>
</dbReference>
<dbReference type="SMR" id="O74689"/>
<dbReference type="BioGRID" id="1951833">
    <property type="interactions" value="1"/>
</dbReference>
<dbReference type="IntAct" id="O74689">
    <property type="interactions" value="1"/>
</dbReference>
<dbReference type="STRING" id="227321.O74689"/>
<dbReference type="EnsemblFungi" id="CBF70134">
    <property type="protein sequence ID" value="CBF70134"/>
    <property type="gene ID" value="ANIA_06125"/>
</dbReference>
<dbReference type="KEGG" id="ani:ANIA_06125"/>
<dbReference type="VEuPathDB" id="FungiDB:AN6125"/>
<dbReference type="eggNOG" id="KOG1853">
    <property type="taxonomic scope" value="Eukaryota"/>
</dbReference>
<dbReference type="HOGENOM" id="CLU_034391_0_0_1"/>
<dbReference type="InParanoid" id="O74689"/>
<dbReference type="OMA" id="NMAIERS"/>
<dbReference type="OrthoDB" id="5877028at2759"/>
<dbReference type="Proteomes" id="UP000000560">
    <property type="component" value="Chromosome I"/>
</dbReference>
<dbReference type="GO" id="GO:0005737">
    <property type="term" value="C:cytoplasm"/>
    <property type="evidence" value="ECO:0007669"/>
    <property type="project" value="UniProtKB-KW"/>
</dbReference>
<dbReference type="GO" id="GO:0005871">
    <property type="term" value="C:kinesin complex"/>
    <property type="evidence" value="ECO:0000318"/>
    <property type="project" value="GO_Central"/>
</dbReference>
<dbReference type="GO" id="GO:0000776">
    <property type="term" value="C:kinetochore"/>
    <property type="evidence" value="ECO:0000318"/>
    <property type="project" value="GO_Central"/>
</dbReference>
<dbReference type="GO" id="GO:0005874">
    <property type="term" value="C:microtubule"/>
    <property type="evidence" value="ECO:0007669"/>
    <property type="project" value="UniProtKB-KW"/>
</dbReference>
<dbReference type="GO" id="GO:0008017">
    <property type="term" value="F:microtubule binding"/>
    <property type="evidence" value="ECO:0000318"/>
    <property type="project" value="GO_Central"/>
</dbReference>
<dbReference type="GO" id="GO:0051642">
    <property type="term" value="P:centrosome localization"/>
    <property type="evidence" value="ECO:0000318"/>
    <property type="project" value="GO_Central"/>
</dbReference>
<dbReference type="GO" id="GO:0007059">
    <property type="term" value="P:chromosome segregation"/>
    <property type="evidence" value="ECO:0000318"/>
    <property type="project" value="GO_Central"/>
</dbReference>
<dbReference type="GO" id="GO:0051303">
    <property type="term" value="P:establishment of chromosome localization"/>
    <property type="evidence" value="ECO:0000318"/>
    <property type="project" value="GO_Central"/>
</dbReference>
<dbReference type="GO" id="GO:0000132">
    <property type="term" value="P:establishment of mitotic spindle orientation"/>
    <property type="evidence" value="ECO:0000318"/>
    <property type="project" value="GO_Central"/>
</dbReference>
<dbReference type="GO" id="GO:0007020">
    <property type="term" value="P:microtubule nucleation"/>
    <property type="evidence" value="ECO:0000318"/>
    <property type="project" value="GO_Central"/>
</dbReference>
<dbReference type="GO" id="GO:0007097">
    <property type="term" value="P:nuclear migration"/>
    <property type="evidence" value="ECO:0000315"/>
    <property type="project" value="AspGD"/>
</dbReference>
<dbReference type="GO" id="GO:0047496">
    <property type="term" value="P:vesicle transport along microtubule"/>
    <property type="evidence" value="ECO:0000318"/>
    <property type="project" value="GO_Central"/>
</dbReference>
<dbReference type="Gene3D" id="6.10.250.1080">
    <property type="match status" value="1"/>
</dbReference>
<dbReference type="InterPro" id="IPR033494">
    <property type="entry name" value="NUDE"/>
</dbReference>
<dbReference type="InterPro" id="IPR006964">
    <property type="entry name" value="NUDE_dom"/>
</dbReference>
<dbReference type="PANTHER" id="PTHR10921:SF1">
    <property type="entry name" value="NUCLEAR DISTRIBUTION PROTEIN NUDE HOMOLOG"/>
    <property type="match status" value="1"/>
</dbReference>
<dbReference type="PANTHER" id="PTHR10921">
    <property type="entry name" value="NUCLEAR DISTRIBUTION PROTEIN NUDE HOMOLOG 1"/>
    <property type="match status" value="1"/>
</dbReference>
<dbReference type="Pfam" id="PF04880">
    <property type="entry name" value="NUDE_C"/>
    <property type="match status" value="1"/>
</dbReference>
<organism>
    <name type="scientific">Emericella nidulans (strain FGSC A4 / ATCC 38163 / CBS 112.46 / NRRL 194 / M139)</name>
    <name type="common">Aspergillus nidulans</name>
    <dbReference type="NCBI Taxonomy" id="227321"/>
    <lineage>
        <taxon>Eukaryota</taxon>
        <taxon>Fungi</taxon>
        <taxon>Dikarya</taxon>
        <taxon>Ascomycota</taxon>
        <taxon>Pezizomycotina</taxon>
        <taxon>Eurotiomycetes</taxon>
        <taxon>Eurotiomycetidae</taxon>
        <taxon>Eurotiales</taxon>
        <taxon>Aspergillaceae</taxon>
        <taxon>Aspergillus</taxon>
        <taxon>Aspergillus subgen. Nidulantes</taxon>
    </lineage>
</organism>